<name>PA2A_LACST</name>
<organism>
    <name type="scientific">Lachesis stenophrys</name>
    <name type="common">Central American bushmaster</name>
    <dbReference type="NCBI Taxonomy" id="88085"/>
    <lineage>
        <taxon>Eukaryota</taxon>
        <taxon>Metazoa</taxon>
        <taxon>Chordata</taxon>
        <taxon>Craniata</taxon>
        <taxon>Vertebrata</taxon>
        <taxon>Euteleostomi</taxon>
        <taxon>Lepidosauria</taxon>
        <taxon>Squamata</taxon>
        <taxon>Bifurcata</taxon>
        <taxon>Unidentata</taxon>
        <taxon>Episquamata</taxon>
        <taxon>Toxicofera</taxon>
        <taxon>Serpentes</taxon>
        <taxon>Colubroidea</taxon>
        <taxon>Viperidae</taxon>
        <taxon>Crotalinae</taxon>
        <taxon>Lachesis</taxon>
    </lineage>
</organism>
<dbReference type="EC" id="3.1.1.4"/>
<dbReference type="SMR" id="P84651"/>
<dbReference type="GO" id="GO:0005576">
    <property type="term" value="C:extracellular region"/>
    <property type="evidence" value="ECO:0007669"/>
    <property type="project" value="UniProtKB-SubCell"/>
</dbReference>
<dbReference type="GO" id="GO:0005509">
    <property type="term" value="F:calcium ion binding"/>
    <property type="evidence" value="ECO:0007669"/>
    <property type="project" value="InterPro"/>
</dbReference>
<dbReference type="GO" id="GO:0047498">
    <property type="term" value="F:calcium-dependent phospholipase A2 activity"/>
    <property type="evidence" value="ECO:0007669"/>
    <property type="project" value="TreeGrafter"/>
</dbReference>
<dbReference type="GO" id="GO:0005543">
    <property type="term" value="F:phospholipid binding"/>
    <property type="evidence" value="ECO:0007669"/>
    <property type="project" value="TreeGrafter"/>
</dbReference>
<dbReference type="GO" id="GO:0050482">
    <property type="term" value="P:arachidonate secretion"/>
    <property type="evidence" value="ECO:0007669"/>
    <property type="project" value="InterPro"/>
</dbReference>
<dbReference type="GO" id="GO:0016042">
    <property type="term" value="P:lipid catabolic process"/>
    <property type="evidence" value="ECO:0007669"/>
    <property type="project" value="UniProtKB-KW"/>
</dbReference>
<dbReference type="GO" id="GO:0042130">
    <property type="term" value="P:negative regulation of T cell proliferation"/>
    <property type="evidence" value="ECO:0007669"/>
    <property type="project" value="TreeGrafter"/>
</dbReference>
<dbReference type="GO" id="GO:0006644">
    <property type="term" value="P:phospholipid metabolic process"/>
    <property type="evidence" value="ECO:0007669"/>
    <property type="project" value="InterPro"/>
</dbReference>
<dbReference type="CDD" id="cd00125">
    <property type="entry name" value="PLA2c"/>
    <property type="match status" value="1"/>
</dbReference>
<dbReference type="FunFam" id="1.20.90.10:FF:000001">
    <property type="entry name" value="Basic phospholipase A2 homolog"/>
    <property type="match status" value="1"/>
</dbReference>
<dbReference type="Gene3D" id="1.20.90.10">
    <property type="entry name" value="Phospholipase A2 domain"/>
    <property type="match status" value="1"/>
</dbReference>
<dbReference type="InterPro" id="IPR001211">
    <property type="entry name" value="PLipase_A2"/>
</dbReference>
<dbReference type="InterPro" id="IPR033112">
    <property type="entry name" value="PLipase_A2_Asp_AS"/>
</dbReference>
<dbReference type="InterPro" id="IPR016090">
    <property type="entry name" value="PLipase_A2_dom"/>
</dbReference>
<dbReference type="InterPro" id="IPR036444">
    <property type="entry name" value="PLipase_A2_dom_sf"/>
</dbReference>
<dbReference type="InterPro" id="IPR033113">
    <property type="entry name" value="PLipase_A2_His_AS"/>
</dbReference>
<dbReference type="PANTHER" id="PTHR11716">
    <property type="entry name" value="PHOSPHOLIPASE A2 FAMILY MEMBER"/>
    <property type="match status" value="1"/>
</dbReference>
<dbReference type="PANTHER" id="PTHR11716:SF9">
    <property type="entry name" value="PHOSPHOLIPASE A2, MEMBRANE ASSOCIATED"/>
    <property type="match status" value="1"/>
</dbReference>
<dbReference type="Pfam" id="PF00068">
    <property type="entry name" value="Phospholip_A2_1"/>
    <property type="match status" value="1"/>
</dbReference>
<dbReference type="PRINTS" id="PR00389">
    <property type="entry name" value="PHPHLIPASEA2"/>
</dbReference>
<dbReference type="SMART" id="SM00085">
    <property type="entry name" value="PA2c"/>
    <property type="match status" value="1"/>
</dbReference>
<dbReference type="SUPFAM" id="SSF48619">
    <property type="entry name" value="Phospholipase A2, PLA2"/>
    <property type="match status" value="1"/>
</dbReference>
<dbReference type="PROSITE" id="PS00119">
    <property type="entry name" value="PA2_ASP"/>
    <property type="match status" value="1"/>
</dbReference>
<dbReference type="PROSITE" id="PS00118">
    <property type="entry name" value="PA2_HIS"/>
    <property type="match status" value="1"/>
</dbReference>
<evidence type="ECO:0000250" key="1"/>
<evidence type="ECO:0000250" key="2">
    <source>
        <dbReference type="UniProtKB" id="O42187"/>
    </source>
</evidence>
<evidence type="ECO:0000250" key="3">
    <source>
        <dbReference type="UniProtKB" id="O42191"/>
    </source>
</evidence>
<evidence type="ECO:0000250" key="4">
    <source>
        <dbReference type="UniProtKB" id="P06859"/>
    </source>
</evidence>
<evidence type="ECO:0000250" key="5">
    <source>
        <dbReference type="UniProtKB" id="P20249"/>
    </source>
</evidence>
<evidence type="ECO:0000255" key="6">
    <source>
        <dbReference type="PROSITE-ProRule" id="PRU10035"/>
    </source>
</evidence>
<evidence type="ECO:0000255" key="7">
    <source>
        <dbReference type="PROSITE-ProRule" id="PRU10036"/>
    </source>
</evidence>
<evidence type="ECO:0000269" key="8">
    <source>
    </source>
</evidence>
<evidence type="ECO:0000303" key="9">
    <source>
    </source>
</evidence>
<evidence type="ECO:0000305" key="10"/>
<keyword id="KW-0106">Calcium</keyword>
<keyword id="KW-0903">Direct protein sequencing</keyword>
<keyword id="KW-1015">Disulfide bond</keyword>
<keyword id="KW-0378">Hydrolase</keyword>
<keyword id="KW-0442">Lipid degradation</keyword>
<keyword id="KW-0443">Lipid metabolism</keyword>
<keyword id="KW-0479">Metal-binding</keyword>
<keyword id="KW-0964">Secreted</keyword>
<reference evidence="10" key="1">
    <citation type="journal article" date="2008" name="Protein J.">
        <title>Purification and complete primary structure of the first PLA2 from Lachesis stenophrys (the central American bushmaster) snake venom.</title>
        <authorList>
            <person name="de Assis E.B."/>
            <person name="Estevao-Costa M.I."/>
            <person name="do Carmo Valentim A."/>
            <person name="Silva-Neto A."/>
            <person name="Cotta G.A."/>
            <person name="Mudado M.A."/>
            <person name="Richardson M."/>
            <person name="Fortes-Dias C.L."/>
        </authorList>
    </citation>
    <scope>PROTEIN SEQUENCE</scope>
    <scope>FUNCTION</scope>
    <scope>CATALYTIC ACTIVITY</scope>
    <scope>SUBCELLULAR LOCATION</scope>
    <scope>TISSUE SPECIFICITY</scope>
    <scope>MASS SPECTROMETRY</scope>
    <source>
        <tissue evidence="8">Venom</tissue>
    </source>
</reference>
<feature type="chain" id="PRO_0000161650" description="Acidic phospholipase A2">
    <location>
        <begin position="1"/>
        <end position="122"/>
    </location>
</feature>
<feature type="active site" evidence="4">
    <location>
        <position position="47"/>
    </location>
</feature>
<feature type="active site" evidence="4">
    <location>
        <position position="89"/>
    </location>
</feature>
<feature type="binding site" evidence="3">
    <location>
        <position position="27"/>
    </location>
    <ligand>
        <name>Ca(2+)</name>
        <dbReference type="ChEBI" id="CHEBI:29108"/>
    </ligand>
</feature>
<feature type="binding site" evidence="3">
    <location>
        <position position="29"/>
    </location>
    <ligand>
        <name>Ca(2+)</name>
        <dbReference type="ChEBI" id="CHEBI:29108"/>
    </ligand>
</feature>
<feature type="binding site" evidence="3">
    <location>
        <position position="31"/>
    </location>
    <ligand>
        <name>Ca(2+)</name>
        <dbReference type="ChEBI" id="CHEBI:29108"/>
    </ligand>
</feature>
<feature type="binding site" evidence="3">
    <location>
        <position position="48"/>
    </location>
    <ligand>
        <name>Ca(2+)</name>
        <dbReference type="ChEBI" id="CHEBI:29108"/>
    </ligand>
</feature>
<feature type="disulfide bond" evidence="2">
    <location>
        <begin position="26"/>
        <end position="115"/>
    </location>
</feature>
<feature type="disulfide bond" evidence="2">
    <location>
        <begin position="28"/>
        <end position="44"/>
    </location>
</feature>
<feature type="disulfide bond" evidence="2">
    <location>
        <begin position="43"/>
        <end position="95"/>
    </location>
</feature>
<feature type="disulfide bond" evidence="2">
    <location>
        <begin position="49"/>
        <end position="122"/>
    </location>
</feature>
<feature type="disulfide bond" evidence="2">
    <location>
        <begin position="50"/>
        <end position="88"/>
    </location>
</feature>
<feature type="disulfide bond" evidence="2">
    <location>
        <begin position="57"/>
        <end position="81"/>
    </location>
</feature>
<feature type="disulfide bond" evidence="2">
    <location>
        <begin position="75"/>
        <end position="86"/>
    </location>
</feature>
<sequence>HLLQFGDLIDKIAGRSGFWYYGFYGCYCGLGGRGRPQDATDRCCFVHDCCYGKVTGCDPKKDIYTYSEENGAIVCGGDNPCKKEICECDRDAAICFRDNLDTYDNKYWLFPNKYCKEESEPC</sequence>
<accession>P84651</accession>
<protein>
    <recommendedName>
        <fullName>Acidic phospholipase A2</fullName>
        <shortName>svPLA2</shortName>
        <ecNumber>3.1.1.4</ecNumber>
    </recommendedName>
    <alternativeName>
        <fullName>LSPA-1</fullName>
    </alternativeName>
    <alternativeName>
        <fullName evidence="5 9">Phosphatidylcholine 2-acylhydrolase</fullName>
    </alternativeName>
</protein>
<proteinExistence type="evidence at protein level"/>
<comment type="function">
    <text evidence="8">PLA2 catalyzes the calcium-dependent hydrolysis of the 2-acyl groups in 3-sn-phosphoglycerides.</text>
</comment>
<comment type="catalytic activity">
    <reaction evidence="6 7 8">
        <text>a 1,2-diacyl-sn-glycero-3-phosphocholine + H2O = a 1-acyl-sn-glycero-3-phosphocholine + a fatty acid + H(+)</text>
        <dbReference type="Rhea" id="RHEA:15801"/>
        <dbReference type="ChEBI" id="CHEBI:15377"/>
        <dbReference type="ChEBI" id="CHEBI:15378"/>
        <dbReference type="ChEBI" id="CHEBI:28868"/>
        <dbReference type="ChEBI" id="CHEBI:57643"/>
        <dbReference type="ChEBI" id="CHEBI:58168"/>
        <dbReference type="EC" id="3.1.1.4"/>
    </reaction>
</comment>
<comment type="cofactor">
    <cofactor evidence="1">
        <name>Ca(2+)</name>
        <dbReference type="ChEBI" id="CHEBI:29108"/>
    </cofactor>
    <text evidence="1">Binds 1 Ca(2+) ion.</text>
</comment>
<comment type="subcellular location">
    <subcellularLocation>
        <location evidence="8">Secreted</location>
    </subcellularLocation>
</comment>
<comment type="tissue specificity">
    <text evidence="8">Expressed by the venom gland.</text>
</comment>
<comment type="mass spectrometry"/>
<comment type="similarity">
    <text evidence="10">Belongs to the phospholipase A2 family. Group II subfamily. D49 sub-subfamily.</text>
</comment>